<geneLocation type="chloroplast"/>
<proteinExistence type="inferred from homology"/>
<keyword id="KW-0150">Chloroplast</keyword>
<keyword id="KW-0934">Plastid</keyword>
<keyword id="KW-1185">Reference proteome</keyword>
<keyword id="KW-0687">Ribonucleoprotein</keyword>
<keyword id="KW-0689">Ribosomal protein</keyword>
<keyword id="KW-0694">RNA-binding</keyword>
<keyword id="KW-0699">rRNA-binding</keyword>
<name>RR12_CYAM1</name>
<evidence type="ECO:0000250" key="1"/>
<evidence type="ECO:0000305" key="2"/>
<comment type="function">
    <text evidence="1">With S4 and S5 plays an important role in translational accuracy. Located at the interface of the 30S and 50S subunits (By similarity).</text>
</comment>
<comment type="subunit">
    <text evidence="1">Part of the 30S ribosomal subunit.</text>
</comment>
<comment type="subcellular location">
    <subcellularLocation>
        <location>Plastid</location>
        <location>Chloroplast</location>
    </subcellularLocation>
</comment>
<comment type="similarity">
    <text evidence="2">Belongs to the universal ribosomal protein uS12 family.</text>
</comment>
<accession>Q85FT9</accession>
<organism>
    <name type="scientific">Cyanidioschyzon merolae (strain NIES-3377 / 10D)</name>
    <name type="common">Unicellular red alga</name>
    <dbReference type="NCBI Taxonomy" id="280699"/>
    <lineage>
        <taxon>Eukaryota</taxon>
        <taxon>Rhodophyta</taxon>
        <taxon>Bangiophyceae</taxon>
        <taxon>Cyanidiales</taxon>
        <taxon>Cyanidiaceae</taxon>
        <taxon>Cyanidioschyzon</taxon>
    </lineage>
</organism>
<reference key="1">
    <citation type="journal article" date="2003" name="DNA Res.">
        <title>Complete sequence and analysis of the plastid genome of the unicellular red alga Cyanidioschyzon merolae.</title>
        <authorList>
            <person name="Ohta N."/>
            <person name="Matsuzaki M."/>
            <person name="Misumi O."/>
            <person name="Miyagishima S.-Y."/>
            <person name="Nozaki H."/>
            <person name="Tanaka K."/>
            <person name="Shin-i T."/>
            <person name="Kohara Y."/>
            <person name="Kuroiwa T."/>
        </authorList>
    </citation>
    <scope>NUCLEOTIDE SEQUENCE [LARGE SCALE GENOMIC DNA]</scope>
    <source>
        <strain>NIES-3377 / 10D</strain>
    </source>
</reference>
<feature type="chain" id="PRO_0000276637" description="Small ribosomal subunit protein uS12c">
    <location>
        <begin position="1"/>
        <end position="122"/>
    </location>
</feature>
<gene>
    <name type="primary">rps12</name>
</gene>
<dbReference type="EMBL" id="AB002583">
    <property type="protein sequence ID" value="BAC76256.1"/>
    <property type="molecule type" value="Genomic_DNA"/>
</dbReference>
<dbReference type="RefSeq" id="NP_849094.1">
    <property type="nucleotide sequence ID" value="NC_004799.1"/>
</dbReference>
<dbReference type="SMR" id="Q85FT9"/>
<dbReference type="STRING" id="280699.Q85FT9"/>
<dbReference type="EnsemblPlants" id="CMV189CT">
    <property type="protein sequence ID" value="CMV189CT"/>
    <property type="gene ID" value="CMV189C"/>
</dbReference>
<dbReference type="GeneID" id="845001"/>
<dbReference type="Gramene" id="CMV189CT">
    <property type="protein sequence ID" value="CMV189CT"/>
    <property type="gene ID" value="CMV189C"/>
</dbReference>
<dbReference type="KEGG" id="cme:CymeCp162"/>
<dbReference type="eggNOG" id="KOG1750">
    <property type="taxonomic scope" value="Eukaryota"/>
</dbReference>
<dbReference type="HOGENOM" id="CLU_104295_1_2_1"/>
<dbReference type="Proteomes" id="UP000007014">
    <property type="component" value="Chloroplast"/>
</dbReference>
<dbReference type="GO" id="GO:0009507">
    <property type="term" value="C:chloroplast"/>
    <property type="evidence" value="ECO:0007669"/>
    <property type="project" value="UniProtKB-SubCell"/>
</dbReference>
<dbReference type="GO" id="GO:0015935">
    <property type="term" value="C:small ribosomal subunit"/>
    <property type="evidence" value="ECO:0007669"/>
    <property type="project" value="InterPro"/>
</dbReference>
<dbReference type="GO" id="GO:0019843">
    <property type="term" value="F:rRNA binding"/>
    <property type="evidence" value="ECO:0007669"/>
    <property type="project" value="UniProtKB-UniRule"/>
</dbReference>
<dbReference type="GO" id="GO:0003735">
    <property type="term" value="F:structural constituent of ribosome"/>
    <property type="evidence" value="ECO:0007669"/>
    <property type="project" value="InterPro"/>
</dbReference>
<dbReference type="GO" id="GO:0006412">
    <property type="term" value="P:translation"/>
    <property type="evidence" value="ECO:0007669"/>
    <property type="project" value="UniProtKB-UniRule"/>
</dbReference>
<dbReference type="CDD" id="cd03368">
    <property type="entry name" value="Ribosomal_S12"/>
    <property type="match status" value="1"/>
</dbReference>
<dbReference type="FunFam" id="2.40.50.140:FF:000001">
    <property type="entry name" value="30S ribosomal protein S12"/>
    <property type="match status" value="1"/>
</dbReference>
<dbReference type="Gene3D" id="2.40.50.140">
    <property type="entry name" value="Nucleic acid-binding proteins"/>
    <property type="match status" value="1"/>
</dbReference>
<dbReference type="HAMAP" id="MF_00403_B">
    <property type="entry name" value="Ribosomal_uS12_B"/>
    <property type="match status" value="1"/>
</dbReference>
<dbReference type="InterPro" id="IPR012340">
    <property type="entry name" value="NA-bd_OB-fold"/>
</dbReference>
<dbReference type="InterPro" id="IPR006032">
    <property type="entry name" value="Ribosomal_uS12"/>
</dbReference>
<dbReference type="InterPro" id="IPR005679">
    <property type="entry name" value="Ribosomal_uS12_bac"/>
</dbReference>
<dbReference type="NCBIfam" id="TIGR00981">
    <property type="entry name" value="rpsL_bact"/>
    <property type="match status" value="1"/>
</dbReference>
<dbReference type="PANTHER" id="PTHR11652">
    <property type="entry name" value="30S RIBOSOMAL PROTEIN S12 FAMILY MEMBER"/>
    <property type="match status" value="1"/>
</dbReference>
<dbReference type="Pfam" id="PF00164">
    <property type="entry name" value="Ribosom_S12_S23"/>
    <property type="match status" value="1"/>
</dbReference>
<dbReference type="PIRSF" id="PIRSF002133">
    <property type="entry name" value="Ribosomal_S12/S23"/>
    <property type="match status" value="1"/>
</dbReference>
<dbReference type="PRINTS" id="PR01034">
    <property type="entry name" value="RIBOSOMALS12"/>
</dbReference>
<dbReference type="SUPFAM" id="SSF50249">
    <property type="entry name" value="Nucleic acid-binding proteins"/>
    <property type="match status" value="1"/>
</dbReference>
<dbReference type="PROSITE" id="PS00055">
    <property type="entry name" value="RIBOSOMAL_S12"/>
    <property type="match status" value="1"/>
</dbReference>
<sequence>MPTLQQLIRFGRQQVMVRPKSAALKRCPQRRGVCVKVYTTTPKKPNSALRKVARVKLTSGYEVTAYIPGIGHNLQEHSVVLVRGGRVKDLPGVRYHIIRGALDTAGVKNRVRSRSKYGVKKA</sequence>
<protein>
    <recommendedName>
        <fullName evidence="2">Small ribosomal subunit protein uS12c</fullName>
    </recommendedName>
    <alternativeName>
        <fullName>30S ribosomal protein S12, chloroplastic</fullName>
    </alternativeName>
</protein>